<organism>
    <name type="scientific">Streptococcus pneumoniae serotype 19F (strain G54)</name>
    <dbReference type="NCBI Taxonomy" id="512566"/>
    <lineage>
        <taxon>Bacteria</taxon>
        <taxon>Bacillati</taxon>
        <taxon>Bacillota</taxon>
        <taxon>Bacilli</taxon>
        <taxon>Lactobacillales</taxon>
        <taxon>Streptococcaceae</taxon>
        <taxon>Streptococcus</taxon>
    </lineage>
</organism>
<evidence type="ECO:0000255" key="1">
    <source>
        <dbReference type="HAMAP-Rule" id="MF_01161"/>
    </source>
</evidence>
<sequence length="425" mass="49903">MREQDFLNHFLKKGYFKKHAKAVLALSGGLDSMFLFKVLSTYQKELEIELILAHVNHKQRIESDWEEKELRKLAAEAELPIYISNFSGEFSEARARNFRYDFFQEVMKKTGATALVTAHHADDQVETILMRLIRGTRLRYLSGIKEKQVVGEIEIIRPFLHFQKKDFPSIFHFEDTSNQENHYFRNRIRNSYLPELEKENPRFRDAILGIGNEILDYDLAIAELSNNIDVENLQQLFSYSESTQRVLLQTYLNRFPDLNLTKAQFAEVQQILKSKSQYRHPIKNGYELIKEYQQFQICKISPQADEKEDELVLHYQNQVAYQGYLFSFGLPLEGELIQQIPVSRETSIHIRHRKTGDVLIQNGHRKKLRRLFIDLKIPMEKRNSALIIEQFGEIVSILGIATNNLSKKTKNDIMNTVLYIEKIDR</sequence>
<keyword id="KW-0067">ATP-binding</keyword>
<keyword id="KW-0963">Cytoplasm</keyword>
<keyword id="KW-0436">Ligase</keyword>
<keyword id="KW-0547">Nucleotide-binding</keyword>
<keyword id="KW-0819">tRNA processing</keyword>
<name>TILS_STRP4</name>
<gene>
    <name evidence="1" type="primary">tilS</name>
    <name type="ordered locus">SPG_0011</name>
</gene>
<reference key="1">
    <citation type="journal article" date="2001" name="Microb. Drug Resist.">
        <title>Annotated draft genomic sequence from a Streptococcus pneumoniae type 19F clinical isolate.</title>
        <authorList>
            <person name="Dopazo J."/>
            <person name="Mendoza A."/>
            <person name="Herrero J."/>
            <person name="Caldara F."/>
            <person name="Humbert Y."/>
            <person name="Friedli L."/>
            <person name="Guerrier M."/>
            <person name="Grand-Schenk E."/>
            <person name="Gandin C."/>
            <person name="de Francesco M."/>
            <person name="Polissi A."/>
            <person name="Buell G."/>
            <person name="Feger G."/>
            <person name="Garcia E."/>
            <person name="Peitsch M."/>
            <person name="Garcia-Bustos J.F."/>
        </authorList>
    </citation>
    <scope>NUCLEOTIDE SEQUENCE [LARGE SCALE GENOMIC DNA]</scope>
    <source>
        <strain>G54</strain>
    </source>
</reference>
<reference key="2">
    <citation type="submission" date="2008-03" db="EMBL/GenBank/DDBJ databases">
        <title>Pneumococcal beta glucoside metabolism investigated by whole genome comparison.</title>
        <authorList>
            <person name="Mulas L."/>
            <person name="Trappetti C."/>
            <person name="Hakenbeck R."/>
            <person name="Iannelli F."/>
            <person name="Pozzi G."/>
            <person name="Davidsen T.M."/>
            <person name="Tettelin H."/>
            <person name="Oggioni M."/>
        </authorList>
    </citation>
    <scope>NUCLEOTIDE SEQUENCE [LARGE SCALE GENOMIC DNA]</scope>
    <source>
        <strain>G54</strain>
    </source>
</reference>
<comment type="function">
    <text evidence="1">Ligates lysine onto the cytidine present at position 34 of the AUA codon-specific tRNA(Ile) that contains the anticodon CAU, in an ATP-dependent manner. Cytidine is converted to lysidine, thus changing the amino acid specificity of the tRNA from methionine to isoleucine.</text>
</comment>
<comment type="catalytic activity">
    <reaction evidence="1">
        <text>cytidine(34) in tRNA(Ile2) + L-lysine + ATP = lysidine(34) in tRNA(Ile2) + AMP + diphosphate + H(+)</text>
        <dbReference type="Rhea" id="RHEA:43744"/>
        <dbReference type="Rhea" id="RHEA-COMP:10625"/>
        <dbReference type="Rhea" id="RHEA-COMP:10670"/>
        <dbReference type="ChEBI" id="CHEBI:15378"/>
        <dbReference type="ChEBI" id="CHEBI:30616"/>
        <dbReference type="ChEBI" id="CHEBI:32551"/>
        <dbReference type="ChEBI" id="CHEBI:33019"/>
        <dbReference type="ChEBI" id="CHEBI:82748"/>
        <dbReference type="ChEBI" id="CHEBI:83665"/>
        <dbReference type="ChEBI" id="CHEBI:456215"/>
        <dbReference type="EC" id="6.3.4.19"/>
    </reaction>
</comment>
<comment type="subcellular location">
    <subcellularLocation>
        <location evidence="1">Cytoplasm</location>
    </subcellularLocation>
</comment>
<comment type="domain">
    <text>The N-terminal region contains the highly conserved SGGXDS motif, predicted to be a P-loop motif involved in ATP binding.</text>
</comment>
<comment type="similarity">
    <text evidence="1">Belongs to the tRNA(Ile)-lysidine synthase family.</text>
</comment>
<protein>
    <recommendedName>
        <fullName evidence="1">tRNA(Ile)-lysidine synthase</fullName>
        <ecNumber evidence="1">6.3.4.19</ecNumber>
    </recommendedName>
    <alternativeName>
        <fullName evidence="1">tRNA(Ile)-2-lysyl-cytidine synthase</fullName>
    </alternativeName>
    <alternativeName>
        <fullName evidence="1">tRNA(Ile)-lysidine synthetase</fullName>
    </alternativeName>
</protein>
<accession>B5E578</accession>
<dbReference type="EC" id="6.3.4.19" evidence="1"/>
<dbReference type="EMBL" id="CP001015">
    <property type="protein sequence ID" value="ACF56646.1"/>
    <property type="molecule type" value="Genomic_DNA"/>
</dbReference>
<dbReference type="SMR" id="B5E578"/>
<dbReference type="KEGG" id="spx:SPG_0011"/>
<dbReference type="HOGENOM" id="CLU_018869_0_2_9"/>
<dbReference type="GO" id="GO:0005737">
    <property type="term" value="C:cytoplasm"/>
    <property type="evidence" value="ECO:0007669"/>
    <property type="project" value="UniProtKB-SubCell"/>
</dbReference>
<dbReference type="GO" id="GO:0005524">
    <property type="term" value="F:ATP binding"/>
    <property type="evidence" value="ECO:0007669"/>
    <property type="project" value="UniProtKB-UniRule"/>
</dbReference>
<dbReference type="GO" id="GO:0032267">
    <property type="term" value="F:tRNA(Ile)-lysidine synthase activity"/>
    <property type="evidence" value="ECO:0007669"/>
    <property type="project" value="UniProtKB-EC"/>
</dbReference>
<dbReference type="GO" id="GO:0006400">
    <property type="term" value="P:tRNA modification"/>
    <property type="evidence" value="ECO:0007669"/>
    <property type="project" value="UniProtKB-UniRule"/>
</dbReference>
<dbReference type="CDD" id="cd01992">
    <property type="entry name" value="TilS_N"/>
    <property type="match status" value="1"/>
</dbReference>
<dbReference type="Gene3D" id="3.40.50.620">
    <property type="entry name" value="HUPs"/>
    <property type="match status" value="1"/>
</dbReference>
<dbReference type="HAMAP" id="MF_01161">
    <property type="entry name" value="tRNA_Ile_lys_synt"/>
    <property type="match status" value="1"/>
</dbReference>
<dbReference type="InterPro" id="IPR012796">
    <property type="entry name" value="Lysidine-tRNA-synth_C"/>
</dbReference>
<dbReference type="InterPro" id="IPR014729">
    <property type="entry name" value="Rossmann-like_a/b/a_fold"/>
</dbReference>
<dbReference type="InterPro" id="IPR011063">
    <property type="entry name" value="TilS/TtcA_N"/>
</dbReference>
<dbReference type="InterPro" id="IPR012094">
    <property type="entry name" value="tRNA_Ile_lys_synt"/>
</dbReference>
<dbReference type="InterPro" id="IPR012795">
    <property type="entry name" value="tRNA_Ile_lys_synt_N"/>
</dbReference>
<dbReference type="NCBIfam" id="TIGR02433">
    <property type="entry name" value="lysidine_TilS_C"/>
    <property type="match status" value="1"/>
</dbReference>
<dbReference type="NCBIfam" id="TIGR02432">
    <property type="entry name" value="lysidine_TilS_N"/>
    <property type="match status" value="1"/>
</dbReference>
<dbReference type="PANTHER" id="PTHR43033">
    <property type="entry name" value="TRNA(ILE)-LYSIDINE SYNTHASE-RELATED"/>
    <property type="match status" value="1"/>
</dbReference>
<dbReference type="PANTHER" id="PTHR43033:SF1">
    <property type="entry name" value="TRNA(ILE)-LYSIDINE SYNTHASE-RELATED"/>
    <property type="match status" value="1"/>
</dbReference>
<dbReference type="Pfam" id="PF01171">
    <property type="entry name" value="ATP_bind_3"/>
    <property type="match status" value="1"/>
</dbReference>
<dbReference type="Pfam" id="PF11734">
    <property type="entry name" value="TilS_C"/>
    <property type="match status" value="1"/>
</dbReference>
<dbReference type="SMART" id="SM00977">
    <property type="entry name" value="TilS_C"/>
    <property type="match status" value="1"/>
</dbReference>
<dbReference type="SUPFAM" id="SSF52402">
    <property type="entry name" value="Adenine nucleotide alpha hydrolases-like"/>
    <property type="match status" value="1"/>
</dbReference>
<dbReference type="SUPFAM" id="SSF56037">
    <property type="entry name" value="PheT/TilS domain"/>
    <property type="match status" value="1"/>
</dbReference>
<feature type="chain" id="PRO_1000137879" description="tRNA(Ile)-lysidine synthase">
    <location>
        <begin position="1"/>
        <end position="425"/>
    </location>
</feature>
<feature type="binding site" evidence="1">
    <location>
        <begin position="27"/>
        <end position="32"/>
    </location>
    <ligand>
        <name>ATP</name>
        <dbReference type="ChEBI" id="CHEBI:30616"/>
    </ligand>
</feature>
<proteinExistence type="inferred from homology"/>